<name>P0_PLRV1</name>
<gene>
    <name type="ORF">ORF0</name>
</gene>
<dbReference type="EMBL" id="D00530">
    <property type="protein sequence ID" value="BAA00416.1"/>
    <property type="molecule type" value="Genomic_RNA"/>
</dbReference>
<dbReference type="PIR" id="JA0117">
    <property type="entry name" value="WMVQ28"/>
</dbReference>
<dbReference type="RefSeq" id="NP_056746.1">
    <property type="nucleotide sequence ID" value="NC_001747.1"/>
</dbReference>
<dbReference type="KEGG" id="vg:1493890"/>
<dbReference type="Proteomes" id="UP000006723">
    <property type="component" value="Segment"/>
</dbReference>
<dbReference type="GO" id="GO:0052170">
    <property type="term" value="P:symbiont-mediated suppression of host innate immune response"/>
    <property type="evidence" value="ECO:0007669"/>
    <property type="project" value="UniProtKB-KW"/>
</dbReference>
<dbReference type="GO" id="GO:0016032">
    <property type="term" value="P:viral process"/>
    <property type="evidence" value="ECO:0007669"/>
    <property type="project" value="InterPro"/>
</dbReference>
<dbReference type="InterPro" id="IPR006755">
    <property type="entry name" value="Virus_P0"/>
</dbReference>
<dbReference type="Pfam" id="PF04662">
    <property type="entry name" value="Luteo_PO"/>
    <property type="match status" value="1"/>
</dbReference>
<comment type="function">
    <text evidence="1 2 3">Suppressor of RNA-mediated gene silencing, also known as post-transcriptional gene silencing (PTGS), a mechanism of plant viral defense that limits the accumulation of viral RNAs (PubMed:24450775, PubMed:30791535). The P0 protein suppresses local PTGS using its F-box-like domain to mediate destabilization and degradation of the AGO1 protein, although not via an interaction with host SKP1A (PubMed:24450775). Participates, together with the proteins P1 and P7, in the inhibition of the induction of aphid-induced host phytohormones (PubMed:31758809). This could play a role in the attraction to the infected plants by aphids (PubMed:31758809).</text>
</comment>
<comment type="domain">
    <text evidence="1">The F-box-like domain is required for suppression of host RNA silencing.</text>
</comment>
<comment type="similarity">
    <text evidence="4">Belongs to the polerovirus P0 protein family.</text>
</comment>
<evidence type="ECO:0000269" key="1">
    <source>
    </source>
</evidence>
<evidence type="ECO:0000269" key="2">
    <source>
    </source>
</evidence>
<evidence type="ECO:0000269" key="3">
    <source>
    </source>
</evidence>
<evidence type="ECO:0000305" key="4"/>
<feature type="chain" id="PRO_0000222393" description="Suppressor of silencing P0">
    <location>
        <begin position="1"/>
        <end position="247"/>
    </location>
</feature>
<feature type="domain" description="F-box-like" evidence="1">
    <location>
        <begin position="76"/>
        <end position="95"/>
    </location>
</feature>
<feature type="mutagenesis site" description="No effect on the systemic RNA silencing suppressor activity." evidence="1">
    <original>LP</original>
    <variation>AA</variation>
    <location>
        <begin position="59"/>
        <end position="60"/>
    </location>
</feature>
<feature type="mutagenesis site" description="Complete loss of systemic RNA silencing suppressor activity." evidence="1">
    <original>LP</original>
    <variation>AA</variation>
    <location>
        <begin position="76"/>
        <end position="77"/>
    </location>
</feature>
<feature type="mutagenesis site" description="Complete loss of systemic RNA silencing suppressor activity." evidence="2">
    <original>L</original>
    <variation>F</variation>
    <location>
        <position position="76"/>
    </location>
</feature>
<feature type="mutagenesis site" description="Complete loss of systemic RNA silencing suppressor activity." evidence="1">
    <original>WG</original>
    <variation>AA</variation>
    <location>
        <begin position="87"/>
        <end position="88"/>
    </location>
</feature>
<feature type="mutagenesis site" description="Complete loss of systemic RNA silencing suppressor activity." evidence="1">
    <original>WG</original>
    <variation>GW</variation>
    <location>
        <begin position="87"/>
        <end position="88"/>
    </location>
</feature>
<feature type="mutagenesis site" description="Complete loss of systemic RNA silencing suppressor activity." evidence="2">
    <original>W</original>
    <variation>R</variation>
    <location>
        <position position="87"/>
    </location>
</feature>
<feature type="mutagenesis site" description="Almost complete loss of systemic RNA silencing suppressor activity." evidence="1">
    <original>W</original>
    <variation>A</variation>
    <location>
        <position position="140"/>
    </location>
</feature>
<feature type="mutagenesis site" description="Complete loss of systemic RNA silencing suppressor activity." evidence="2">
    <original>F</original>
    <variation>R</variation>
    <location>
        <position position="220"/>
    </location>
</feature>
<reference key="1">
    <citation type="journal article" date="1989" name="J. Gen. Virol.">
        <title>Nucleotide sequence of potato leafroll luteovirus RNA.</title>
        <authorList>
            <person name="Mayo M.A."/>
            <person name="Robinson D.J."/>
            <person name="Jolly C.A."/>
            <person name="Hyman L."/>
        </authorList>
    </citation>
    <scope>NUCLEOTIDE SEQUENCE [GENOMIC RNA]</scope>
</reference>
<reference key="2">
    <citation type="journal article" date="2014" name="Mol. Plant Microbe Interact.">
        <title>Amino acid sequence motifs essential for P0-mediated suppression of RNA silencing in an isolate of potato leafroll virus from Inner Mongolia.</title>
        <authorList>
            <person name="Zhuo T."/>
            <person name="Li Y.Y."/>
            <person name="Xiang H.Y."/>
            <person name="Wu Z.Y."/>
            <person name="Wang X.B."/>
            <person name="Wang Y."/>
            <person name="Zhang Y.L."/>
            <person name="Li D.W."/>
            <person name="Yu J.L."/>
            <person name="Han C.G."/>
        </authorList>
    </citation>
    <scope>FUNCTION</scope>
    <scope>MUTAGENESIS OF 59-LEU-PRO-60; 76-LEU-PRO-77; 87-TRP-GLY-88 AND TRP-140</scope>
    <scope>DOMAIN</scope>
    <source>
        <strain>PLRV-IM</strain>
    </source>
</reference>
<reference key="3">
    <citation type="journal article" date="2019" name="Viruses">
        <title>The Three Essential Motifs in P0 for Suppression of RNA Silencing Activity of Potato leafroll virus Are Required for Virus Systemic Infection.</title>
        <authorList>
            <person name="Rashid M.O."/>
            <person name="Zhang X.Y."/>
            <person name="Wang Y."/>
            <person name="Li D.W."/>
            <person name="Yu J.L."/>
            <person name="Han C.G."/>
        </authorList>
    </citation>
    <scope>MUTAGENESIS OF LEU-76; TRP-87 AND PHE-220</scope>
    <scope>FUNCTION</scope>
</reference>
<reference key="4">
    <citation type="journal article" date="2020" name="Plant Cell Environ.">
        <title>A polerovirus, Potato leafroll virus, alters plant-vector interactions using three viral proteins.</title>
        <authorList>
            <person name="Patton M.F."/>
            <person name="Bak A."/>
            <person name="Sayre J.M."/>
            <person name="Heck M.L."/>
            <person name="Casteel C.L."/>
        </authorList>
    </citation>
    <scope>FUNCTION</scope>
</reference>
<organism>
    <name type="scientific">Potato leafroll virus (strain Potato/Scotland/strain 1/1984)</name>
    <name type="common">PLrV</name>
    <dbReference type="NCBI Taxonomy" id="12046"/>
    <lineage>
        <taxon>Viruses</taxon>
        <taxon>Riboviria</taxon>
        <taxon>Orthornavirae</taxon>
        <taxon>Pisuviricota</taxon>
        <taxon>Pisoniviricetes</taxon>
        <taxon>Sobelivirales</taxon>
        <taxon>Solemoviridae</taxon>
        <taxon>Polerovirus</taxon>
        <taxon>Potato leafroll virus</taxon>
    </lineage>
</organism>
<organismHost>
    <name type="scientific">Solanum tuberosum</name>
    <name type="common">Potato</name>
    <dbReference type="NCBI Taxonomy" id="4113"/>
</organismHost>
<keyword id="KW-0945">Host-virus interaction</keyword>
<keyword id="KW-1090">Inhibition of host innate immune response by virus</keyword>
<keyword id="KW-1185">Reference proteome</keyword>
<keyword id="KW-0941">Suppressor of RNA silencing</keyword>
<keyword id="KW-0899">Viral immunoevasion</keyword>
<accession>P17518</accession>
<sequence>MIVLTQSGTLLFDQRFKLSKFLFVVIATGFPLLLQQASLIYGYNHEQIYRICRSFLHVLPLLNCKRGRISTSGLQLPRHLHYECLEWGLLCGTHPAIQIVGLTIVIKLDDPTTAAAYRSELLRVSSSSYIQNAAGLSNGWGHDMEAFVRNAICLLELRERSIPQSGLRDLMGNYQHLVRSLLDACKVDHFVPLDFQHRSLMLNFARLYNQLDLQGRAKSFRALTGFPVYVPSEDYLEGSFLQKELQE</sequence>
<protein>
    <recommendedName>
        <fullName>Suppressor of silencing P0</fullName>
    </recommendedName>
    <alternativeName>
        <fullName>28 kDa protein</fullName>
    </alternativeName>
    <alternativeName>
        <fullName>Protein ORF0</fullName>
    </alternativeName>
</protein>
<proteinExistence type="evidence at protein level"/>